<comment type="function">
    <text evidence="2">Highly inhibits both nicotinic acetylcholine receptors (neuronal (alpha-3/beta-4) and muscular (alpha-1/beta-1/epsilon/delta) subtypes) and the voltage-gated potassium channel Kv1.6/KCNA6 subtype.</text>
</comment>
<comment type="subcellular location">
    <subcellularLocation>
        <location evidence="6">Secreted</location>
    </subcellularLocation>
</comment>
<comment type="tissue specificity">
    <text evidence="6">Expressed by the venom duct.</text>
</comment>
<comment type="domain">
    <text evidence="5">The cysteine framework is XIV (C-C-C-C).</text>
</comment>
<comment type="similarity">
    <text evidence="5">Belongs to the conotoxin J superfamily.</text>
</comment>
<accession>Q0N4U7</accession>
<keyword id="KW-0008">Acetylcholine receptor inhibiting toxin</keyword>
<keyword id="KW-0027">Amidation</keyword>
<keyword id="KW-1015">Disulfide bond</keyword>
<keyword id="KW-0872">Ion channel impairing toxin</keyword>
<keyword id="KW-0528">Neurotoxin</keyword>
<keyword id="KW-0629">Postsynaptic neurotoxin</keyword>
<keyword id="KW-0632">Potassium channel impairing toxin</keyword>
<keyword id="KW-0964">Secreted</keyword>
<keyword id="KW-0732">Signal</keyword>
<keyword id="KW-0800">Toxin</keyword>
<keyword id="KW-1220">Voltage-gated potassium channel impairing toxin</keyword>
<organism>
    <name type="scientific">Conus planorbis</name>
    <name type="common">Planorbis cone</name>
    <dbReference type="NCBI Taxonomy" id="97183"/>
    <lineage>
        <taxon>Eukaryota</taxon>
        <taxon>Metazoa</taxon>
        <taxon>Spiralia</taxon>
        <taxon>Lophotrochozoa</taxon>
        <taxon>Mollusca</taxon>
        <taxon>Gastropoda</taxon>
        <taxon>Caenogastropoda</taxon>
        <taxon>Neogastropoda</taxon>
        <taxon>Conoidea</taxon>
        <taxon>Conidae</taxon>
        <taxon>Conus</taxon>
        <taxon>Strategoconus</taxon>
    </lineage>
</organism>
<proteinExistence type="inferred from homology"/>
<dbReference type="EMBL" id="DQ447641">
    <property type="protein sequence ID" value="ABE27007.1"/>
    <property type="molecule type" value="mRNA"/>
</dbReference>
<dbReference type="SMR" id="Q0N4U7"/>
<dbReference type="ConoServer" id="1184">
    <property type="toxin name" value="Pl14.1 precursor"/>
</dbReference>
<dbReference type="GO" id="GO:0005576">
    <property type="term" value="C:extracellular region"/>
    <property type="evidence" value="ECO:0007669"/>
    <property type="project" value="UniProtKB-SubCell"/>
</dbReference>
<dbReference type="GO" id="GO:0035792">
    <property type="term" value="C:host cell postsynaptic membrane"/>
    <property type="evidence" value="ECO:0007669"/>
    <property type="project" value="UniProtKB-KW"/>
</dbReference>
<dbReference type="GO" id="GO:0030550">
    <property type="term" value="F:acetylcholine receptor inhibitor activity"/>
    <property type="evidence" value="ECO:0007669"/>
    <property type="project" value="UniProtKB-KW"/>
</dbReference>
<dbReference type="GO" id="GO:0015459">
    <property type="term" value="F:potassium channel regulator activity"/>
    <property type="evidence" value="ECO:0007669"/>
    <property type="project" value="UniProtKB-KW"/>
</dbReference>
<dbReference type="GO" id="GO:0090729">
    <property type="term" value="F:toxin activity"/>
    <property type="evidence" value="ECO:0007669"/>
    <property type="project" value="UniProtKB-KW"/>
</dbReference>
<evidence type="ECO:0000250" key="1"/>
<evidence type="ECO:0000250" key="2">
    <source>
        <dbReference type="UniProtKB" id="Q0N4U8"/>
    </source>
</evidence>
<evidence type="ECO:0000255" key="3"/>
<evidence type="ECO:0000303" key="4">
    <source>
    </source>
</evidence>
<evidence type="ECO:0000305" key="5"/>
<evidence type="ECO:0000305" key="6">
    <source>
    </source>
</evidence>
<protein>
    <recommendedName>
        <fullName evidence="4 5">Alpha/kappa-conotoxin-like pl14.1</fullName>
    </recommendedName>
</protein>
<reference key="1">
    <citation type="journal article" date="2006" name="Biochemistry">
        <title>A novel conotoxin inhibitor of Kv1.6 channel and nAChR subtypes defines a new superfamily of conotoxins.</title>
        <authorList>
            <person name="Imperial J.S."/>
            <person name="Bansal P.S."/>
            <person name="Alewood P.F."/>
            <person name="Daly N.L."/>
            <person name="Craik D.J."/>
            <person name="Sporning A."/>
            <person name="Terlau H."/>
            <person name="Lopez-Vera E."/>
            <person name="Bandyopadhyay P.K."/>
            <person name="Olivera B.M."/>
        </authorList>
    </citation>
    <scope>NUCLEOTIDE SEQUENCE [MRNA]</scope>
    <source>
        <tissue>Venom duct</tissue>
    </source>
</reference>
<sequence length="76" mass="8025">MPSVRSVTCCCLLWMMLSVQLVTPGSPATAQLSGQRTARGPGSAICNMACRLGQGHMYPFCNCNGKRDVVSSSMAV</sequence>
<name>CJE1_CONPO</name>
<feature type="signal peptide" evidence="3">
    <location>
        <begin position="1"/>
        <end position="27"/>
    </location>
</feature>
<feature type="propeptide" id="PRO_0000260009" evidence="1">
    <location>
        <begin position="28"/>
        <end position="39"/>
    </location>
</feature>
<feature type="peptide" id="PRO_0000260010" description="Alpha/kappa-conotoxin-like pl14.1" evidence="6">
    <location>
        <begin position="40"/>
        <end position="64"/>
    </location>
</feature>
<feature type="propeptide" id="PRO_0000260011" evidence="1">
    <location>
        <begin position="65"/>
        <end position="76"/>
    </location>
</feature>
<feature type="modified residue" description="Asparagine amide" evidence="2">
    <location>
        <position position="64"/>
    </location>
</feature>
<feature type="disulfide bond" evidence="2">
    <location>
        <begin position="46"/>
        <end position="61"/>
    </location>
</feature>
<feature type="disulfide bond" evidence="2">
    <location>
        <begin position="50"/>
        <end position="63"/>
    </location>
</feature>